<keyword id="KW-0119">Carbohydrate metabolism</keyword>
<keyword id="KW-0378">Hydrolase</keyword>
<keyword id="KW-1185">Reference proteome</keyword>
<reference key="1">
    <citation type="journal article" date="2008" name="J. Biotechnol.">
        <title>The lifestyle of Corynebacterium urealyticum derived from its complete genome sequence established by pyrosequencing.</title>
        <authorList>
            <person name="Tauch A."/>
            <person name="Trost E."/>
            <person name="Tilker A."/>
            <person name="Ludewig U."/>
            <person name="Schneiker S."/>
            <person name="Goesmann A."/>
            <person name="Arnold W."/>
            <person name="Bekel T."/>
            <person name="Brinkrolf K."/>
            <person name="Brune I."/>
            <person name="Goetker S."/>
            <person name="Kalinowski J."/>
            <person name="Kamp P.-B."/>
            <person name="Lobo F.P."/>
            <person name="Viehoever P."/>
            <person name="Weisshaar B."/>
            <person name="Soriano F."/>
            <person name="Droege M."/>
            <person name="Puehler A."/>
        </authorList>
    </citation>
    <scope>NUCLEOTIDE SEQUENCE [LARGE SCALE GENOMIC DNA]</scope>
    <source>
        <strain>ATCC 43042 / DSM 7109</strain>
    </source>
</reference>
<gene>
    <name evidence="1" type="primary">nagB</name>
    <name type="ordered locus">cu1512</name>
</gene>
<comment type="function">
    <text evidence="1">Catalyzes the reversible isomerization-deamination of glucosamine 6-phosphate (GlcN6P) to form fructose 6-phosphate (Fru6P) and ammonium ion.</text>
</comment>
<comment type="catalytic activity">
    <reaction evidence="1">
        <text>alpha-D-glucosamine 6-phosphate + H2O = beta-D-fructose 6-phosphate + NH4(+)</text>
        <dbReference type="Rhea" id="RHEA:12172"/>
        <dbReference type="ChEBI" id="CHEBI:15377"/>
        <dbReference type="ChEBI" id="CHEBI:28938"/>
        <dbReference type="ChEBI" id="CHEBI:57634"/>
        <dbReference type="ChEBI" id="CHEBI:75989"/>
        <dbReference type="EC" id="3.5.99.6"/>
    </reaction>
</comment>
<comment type="pathway">
    <text evidence="1">Amino-sugar metabolism; N-acetylneuraminate degradation; D-fructose 6-phosphate from N-acetylneuraminate: step 5/5.</text>
</comment>
<comment type="similarity">
    <text evidence="1">Belongs to the glucosamine/galactosamine-6-phosphate isomerase family. NagB subfamily.</text>
</comment>
<organism>
    <name type="scientific">Corynebacterium urealyticum (strain ATCC 43042 / DSM 7109)</name>
    <dbReference type="NCBI Taxonomy" id="504474"/>
    <lineage>
        <taxon>Bacteria</taxon>
        <taxon>Bacillati</taxon>
        <taxon>Actinomycetota</taxon>
        <taxon>Actinomycetes</taxon>
        <taxon>Mycobacteriales</taxon>
        <taxon>Corynebacteriaceae</taxon>
        <taxon>Corynebacterium</taxon>
    </lineage>
</organism>
<protein>
    <recommendedName>
        <fullName evidence="1">Glucosamine-6-phosphate deaminase</fullName>
        <ecNumber evidence="1">3.5.99.6</ecNumber>
    </recommendedName>
    <alternativeName>
        <fullName evidence="1">GlcN6P deaminase</fullName>
        <shortName evidence="1">GNPDA</shortName>
    </alternativeName>
    <alternativeName>
        <fullName evidence="1">Glucosamine-6-phosphate isomerase</fullName>
    </alternativeName>
</protein>
<dbReference type="EC" id="3.5.99.6" evidence="1"/>
<dbReference type="EMBL" id="AM942444">
    <property type="protein sequence ID" value="CAQ05472.1"/>
    <property type="molecule type" value="Genomic_DNA"/>
</dbReference>
<dbReference type="RefSeq" id="WP_012360757.1">
    <property type="nucleotide sequence ID" value="NC_010545.1"/>
</dbReference>
<dbReference type="SMR" id="B1VI88"/>
<dbReference type="STRING" id="504474.cu1512"/>
<dbReference type="GeneID" id="60604289"/>
<dbReference type="KEGG" id="cur:cu1512"/>
<dbReference type="eggNOG" id="COG0363">
    <property type="taxonomic scope" value="Bacteria"/>
</dbReference>
<dbReference type="HOGENOM" id="CLU_049611_1_1_11"/>
<dbReference type="UniPathway" id="UPA00629">
    <property type="reaction ID" value="UER00684"/>
</dbReference>
<dbReference type="Proteomes" id="UP000001727">
    <property type="component" value="Chromosome"/>
</dbReference>
<dbReference type="GO" id="GO:0005737">
    <property type="term" value="C:cytoplasm"/>
    <property type="evidence" value="ECO:0007669"/>
    <property type="project" value="TreeGrafter"/>
</dbReference>
<dbReference type="GO" id="GO:0004342">
    <property type="term" value="F:glucosamine-6-phosphate deaminase activity"/>
    <property type="evidence" value="ECO:0007669"/>
    <property type="project" value="UniProtKB-UniRule"/>
</dbReference>
<dbReference type="GO" id="GO:0042802">
    <property type="term" value="F:identical protein binding"/>
    <property type="evidence" value="ECO:0007669"/>
    <property type="project" value="TreeGrafter"/>
</dbReference>
<dbReference type="GO" id="GO:0005975">
    <property type="term" value="P:carbohydrate metabolic process"/>
    <property type="evidence" value="ECO:0007669"/>
    <property type="project" value="InterPro"/>
</dbReference>
<dbReference type="GO" id="GO:0006043">
    <property type="term" value="P:glucosamine catabolic process"/>
    <property type="evidence" value="ECO:0007669"/>
    <property type="project" value="TreeGrafter"/>
</dbReference>
<dbReference type="GO" id="GO:0006046">
    <property type="term" value="P:N-acetylglucosamine catabolic process"/>
    <property type="evidence" value="ECO:0007669"/>
    <property type="project" value="TreeGrafter"/>
</dbReference>
<dbReference type="GO" id="GO:0019262">
    <property type="term" value="P:N-acetylneuraminate catabolic process"/>
    <property type="evidence" value="ECO:0007669"/>
    <property type="project" value="UniProtKB-UniRule"/>
</dbReference>
<dbReference type="CDD" id="cd01399">
    <property type="entry name" value="GlcN6P_deaminase"/>
    <property type="match status" value="1"/>
</dbReference>
<dbReference type="Gene3D" id="3.40.50.1360">
    <property type="match status" value="1"/>
</dbReference>
<dbReference type="HAMAP" id="MF_01241">
    <property type="entry name" value="GlcN6P_deamin"/>
    <property type="match status" value="1"/>
</dbReference>
<dbReference type="InterPro" id="IPR006148">
    <property type="entry name" value="Glc/Gal-6P_isomerase"/>
</dbReference>
<dbReference type="InterPro" id="IPR004547">
    <property type="entry name" value="Glucosamine6P_isomerase"/>
</dbReference>
<dbReference type="InterPro" id="IPR018321">
    <property type="entry name" value="Glucosamine6P_isomerase_CS"/>
</dbReference>
<dbReference type="InterPro" id="IPR037171">
    <property type="entry name" value="NagB/RpiA_transferase-like"/>
</dbReference>
<dbReference type="NCBIfam" id="TIGR00502">
    <property type="entry name" value="nagB"/>
    <property type="match status" value="1"/>
</dbReference>
<dbReference type="NCBIfam" id="NF001684">
    <property type="entry name" value="PRK00443.1-4"/>
    <property type="match status" value="1"/>
</dbReference>
<dbReference type="PANTHER" id="PTHR11280">
    <property type="entry name" value="GLUCOSAMINE-6-PHOSPHATE ISOMERASE"/>
    <property type="match status" value="1"/>
</dbReference>
<dbReference type="PANTHER" id="PTHR11280:SF5">
    <property type="entry name" value="GLUCOSAMINE-6-PHOSPHATE ISOMERASE"/>
    <property type="match status" value="1"/>
</dbReference>
<dbReference type="Pfam" id="PF01182">
    <property type="entry name" value="Glucosamine_iso"/>
    <property type="match status" value="1"/>
</dbReference>
<dbReference type="SUPFAM" id="SSF100950">
    <property type="entry name" value="NagB/RpiA/CoA transferase-like"/>
    <property type="match status" value="1"/>
</dbReference>
<dbReference type="PROSITE" id="PS01161">
    <property type="entry name" value="GLC_GALNAC_ISOMERASE"/>
    <property type="match status" value="1"/>
</dbReference>
<proteinExistence type="inferred from homology"/>
<sequence>MDVVIRQTPKEVAQLAATIMARYVSEGKNIGLATGSTPLLTYQELIAKHREGLSFANTTAFLLDEYVGLPEDHEQSYHYTIYNEFTQYVDFADGAVHTPDGMNPRTDEAGREYEEAIEAAGGIDIQLLGVGTNGHVGFNEPGSSFDSLTRLKTLHPQTRRDNARFFGSLEQVPIHVITQGLGTIRRAGHLLLLATGENKADAVAKLVEGPVSAMMPASVLQLHRHATVIVDEAAASQLQETEFYRFVDANRPEWQAY</sequence>
<name>NAGB_CORU7</name>
<feature type="chain" id="PRO_1000139767" description="Glucosamine-6-phosphate deaminase">
    <location>
        <begin position="1"/>
        <end position="257"/>
    </location>
</feature>
<feature type="active site" description="Proton acceptor; for enolization step" evidence="1">
    <location>
        <position position="64"/>
    </location>
</feature>
<feature type="active site" description="For ring-opening step" evidence="1">
    <location>
        <position position="133"/>
    </location>
</feature>
<feature type="active site" description="Proton acceptor; for ring-opening step" evidence="1">
    <location>
        <position position="135"/>
    </location>
</feature>
<feature type="active site" description="For ring-opening step" evidence="1">
    <location>
        <position position="140"/>
    </location>
</feature>
<accession>B1VI88</accession>
<evidence type="ECO:0000255" key="1">
    <source>
        <dbReference type="HAMAP-Rule" id="MF_01241"/>
    </source>
</evidence>